<keyword id="KW-1003">Cell membrane</keyword>
<keyword id="KW-0472">Membrane</keyword>
<keyword id="KW-1185">Reference proteome</keyword>
<keyword id="KW-0812">Transmembrane</keyword>
<keyword id="KW-1133">Transmembrane helix</keyword>
<keyword id="KW-0813">Transport</keyword>
<dbReference type="EMBL" id="AL009126">
    <property type="protein sequence ID" value="CAB12517.1"/>
    <property type="molecule type" value="Genomic_DNA"/>
</dbReference>
<dbReference type="PIR" id="G69796">
    <property type="entry name" value="G69796"/>
</dbReference>
<dbReference type="RefSeq" id="WP_003233835.1">
    <property type="nucleotide sequence ID" value="NZ_OZ025638.1"/>
</dbReference>
<dbReference type="SMR" id="O31519"/>
<dbReference type="FunCoup" id="O31519">
    <property type="interactions" value="137"/>
</dbReference>
<dbReference type="STRING" id="224308.BSU06980"/>
<dbReference type="PaxDb" id="224308-BSU06980"/>
<dbReference type="EnsemblBacteria" id="CAB12517">
    <property type="protein sequence ID" value="CAB12517"/>
    <property type="gene ID" value="BSU_06980"/>
</dbReference>
<dbReference type="GeneID" id="936076"/>
<dbReference type="KEGG" id="bsu:BSU06980"/>
<dbReference type="PATRIC" id="fig|224308.43.peg.736"/>
<dbReference type="eggNOG" id="COG1175">
    <property type="taxonomic scope" value="Bacteria"/>
</dbReference>
<dbReference type="InParanoid" id="O31519"/>
<dbReference type="OrthoDB" id="9788108at2"/>
<dbReference type="PhylomeDB" id="O31519"/>
<dbReference type="BioCyc" id="BSUB:BSU06980-MONOMER"/>
<dbReference type="Proteomes" id="UP000001570">
    <property type="component" value="Chromosome"/>
</dbReference>
<dbReference type="GO" id="GO:0005886">
    <property type="term" value="C:plasma membrane"/>
    <property type="evidence" value="ECO:0007669"/>
    <property type="project" value="UniProtKB-SubCell"/>
</dbReference>
<dbReference type="GO" id="GO:0055085">
    <property type="term" value="P:transmembrane transport"/>
    <property type="evidence" value="ECO:0007669"/>
    <property type="project" value="InterPro"/>
</dbReference>
<dbReference type="CDD" id="cd06261">
    <property type="entry name" value="TM_PBP2"/>
    <property type="match status" value="1"/>
</dbReference>
<dbReference type="Gene3D" id="1.10.3720.10">
    <property type="entry name" value="MetI-like"/>
    <property type="match status" value="1"/>
</dbReference>
<dbReference type="InterPro" id="IPR051393">
    <property type="entry name" value="ABC_transporter_permease"/>
</dbReference>
<dbReference type="InterPro" id="IPR000515">
    <property type="entry name" value="MetI-like"/>
</dbReference>
<dbReference type="InterPro" id="IPR035906">
    <property type="entry name" value="MetI-like_sf"/>
</dbReference>
<dbReference type="PANTHER" id="PTHR30193">
    <property type="entry name" value="ABC TRANSPORTER PERMEASE PROTEIN"/>
    <property type="match status" value="1"/>
</dbReference>
<dbReference type="PANTHER" id="PTHR30193:SF1">
    <property type="entry name" value="ABC TRANSPORTER PERMEASE PROTEIN YESP-RELATED"/>
    <property type="match status" value="1"/>
</dbReference>
<dbReference type="Pfam" id="PF00528">
    <property type="entry name" value="BPD_transp_1"/>
    <property type="match status" value="1"/>
</dbReference>
<dbReference type="SUPFAM" id="SSF161098">
    <property type="entry name" value="MetI-like"/>
    <property type="match status" value="1"/>
</dbReference>
<dbReference type="PROSITE" id="PS50928">
    <property type="entry name" value="ABC_TM1"/>
    <property type="match status" value="1"/>
</dbReference>
<organism>
    <name type="scientific">Bacillus subtilis (strain 168)</name>
    <dbReference type="NCBI Taxonomy" id="224308"/>
    <lineage>
        <taxon>Bacteria</taxon>
        <taxon>Bacillati</taxon>
        <taxon>Bacillota</taxon>
        <taxon>Bacilli</taxon>
        <taxon>Bacillales</taxon>
        <taxon>Bacillaceae</taxon>
        <taxon>Bacillus</taxon>
    </lineage>
</organism>
<name>YESP_BACSU</name>
<accession>O31519</accession>
<feature type="chain" id="PRO_0000060269" description="Probable ABC transporter permease protein YesP">
    <location>
        <begin position="1"/>
        <end position="309"/>
    </location>
</feature>
<feature type="transmembrane region" description="Helical" evidence="2">
    <location>
        <begin position="29"/>
        <end position="49"/>
    </location>
</feature>
<feature type="transmembrane region" description="Helical" evidence="2">
    <location>
        <begin position="84"/>
        <end position="104"/>
    </location>
</feature>
<feature type="transmembrane region" description="Helical" evidence="2">
    <location>
        <begin position="114"/>
        <end position="134"/>
    </location>
</feature>
<feature type="transmembrane region" description="Helical" evidence="2">
    <location>
        <begin position="167"/>
        <end position="187"/>
    </location>
</feature>
<feature type="transmembrane region" description="Helical" evidence="2">
    <location>
        <begin position="217"/>
        <end position="237"/>
    </location>
</feature>
<feature type="transmembrane region" description="Helical" evidence="2">
    <location>
        <begin position="275"/>
        <end position="295"/>
    </location>
</feature>
<feature type="domain" description="ABC transmembrane type-1" evidence="2">
    <location>
        <begin position="80"/>
        <end position="294"/>
    </location>
</feature>
<protein>
    <recommendedName>
        <fullName>Probable ABC transporter permease protein YesP</fullName>
    </recommendedName>
</protein>
<evidence type="ECO:0000250" key="1"/>
<evidence type="ECO:0000255" key="2">
    <source>
        <dbReference type="PROSITE-ProRule" id="PRU00441"/>
    </source>
</evidence>
<evidence type="ECO:0000305" key="3"/>
<comment type="function">
    <text evidence="1">Part of a binding-protein-dependent transport system. Probably responsible for the translocation of the substrate across the membrane (By similarity).</text>
</comment>
<comment type="subcellular location">
    <subcellularLocation>
        <location evidence="3">Cell membrane</location>
        <topology evidence="3">Multi-pass membrane protein</topology>
    </subcellularLocation>
</comment>
<comment type="similarity">
    <text evidence="3">Belongs to the binding-protein-dependent transport system permease family. MalFG subfamily.</text>
</comment>
<gene>
    <name type="primary">yesP</name>
    <name type="ordered locus">BSU06980</name>
</gene>
<proteinExistence type="inferred from homology"/>
<sequence>MTGNGADAMKKSRSIRKDNLAGYAFISPFIIGFLCFTVIPMGASLFLSFTSYDLFTAPKWIGLDNFKEMFTGDEKYWQSLKVTFTYVLAGVPLRLGFALFIAVILNNAAKGTAIYRTLFYLPSIIGGSVAVAIMWRNIFGNDGVINALLFFVGIDQKILWYQNPTSALWTLILLSVWQFGSSMLIFLAGLKNIPSSYLEAASVDGANRVQRFFKITLPILTPIIFFNLVMQTISAFMTFTPAYIISKGEGGPLDGTLLYSLYLFQRAFNYFQMGYASAMAWVMLVIVGLITLILFKTSSYWVHYESKEE</sequence>
<reference key="1">
    <citation type="journal article" date="1997" name="Nature">
        <title>The complete genome sequence of the Gram-positive bacterium Bacillus subtilis.</title>
        <authorList>
            <person name="Kunst F."/>
            <person name="Ogasawara N."/>
            <person name="Moszer I."/>
            <person name="Albertini A.M."/>
            <person name="Alloni G."/>
            <person name="Azevedo V."/>
            <person name="Bertero M.G."/>
            <person name="Bessieres P."/>
            <person name="Bolotin A."/>
            <person name="Borchert S."/>
            <person name="Borriss R."/>
            <person name="Boursier L."/>
            <person name="Brans A."/>
            <person name="Braun M."/>
            <person name="Brignell S.C."/>
            <person name="Bron S."/>
            <person name="Brouillet S."/>
            <person name="Bruschi C.V."/>
            <person name="Caldwell B."/>
            <person name="Capuano V."/>
            <person name="Carter N.M."/>
            <person name="Choi S.-K."/>
            <person name="Codani J.-J."/>
            <person name="Connerton I.F."/>
            <person name="Cummings N.J."/>
            <person name="Daniel R.A."/>
            <person name="Denizot F."/>
            <person name="Devine K.M."/>
            <person name="Duesterhoeft A."/>
            <person name="Ehrlich S.D."/>
            <person name="Emmerson P.T."/>
            <person name="Entian K.-D."/>
            <person name="Errington J."/>
            <person name="Fabret C."/>
            <person name="Ferrari E."/>
            <person name="Foulger D."/>
            <person name="Fritz C."/>
            <person name="Fujita M."/>
            <person name="Fujita Y."/>
            <person name="Fuma S."/>
            <person name="Galizzi A."/>
            <person name="Galleron N."/>
            <person name="Ghim S.-Y."/>
            <person name="Glaser P."/>
            <person name="Goffeau A."/>
            <person name="Golightly E.J."/>
            <person name="Grandi G."/>
            <person name="Guiseppi G."/>
            <person name="Guy B.J."/>
            <person name="Haga K."/>
            <person name="Haiech J."/>
            <person name="Harwood C.R."/>
            <person name="Henaut A."/>
            <person name="Hilbert H."/>
            <person name="Holsappel S."/>
            <person name="Hosono S."/>
            <person name="Hullo M.-F."/>
            <person name="Itaya M."/>
            <person name="Jones L.-M."/>
            <person name="Joris B."/>
            <person name="Karamata D."/>
            <person name="Kasahara Y."/>
            <person name="Klaerr-Blanchard M."/>
            <person name="Klein C."/>
            <person name="Kobayashi Y."/>
            <person name="Koetter P."/>
            <person name="Koningstein G."/>
            <person name="Krogh S."/>
            <person name="Kumano M."/>
            <person name="Kurita K."/>
            <person name="Lapidus A."/>
            <person name="Lardinois S."/>
            <person name="Lauber J."/>
            <person name="Lazarevic V."/>
            <person name="Lee S.-M."/>
            <person name="Levine A."/>
            <person name="Liu H."/>
            <person name="Masuda S."/>
            <person name="Mauel C."/>
            <person name="Medigue C."/>
            <person name="Medina N."/>
            <person name="Mellado R.P."/>
            <person name="Mizuno M."/>
            <person name="Moestl D."/>
            <person name="Nakai S."/>
            <person name="Noback M."/>
            <person name="Noone D."/>
            <person name="O'Reilly M."/>
            <person name="Ogawa K."/>
            <person name="Ogiwara A."/>
            <person name="Oudega B."/>
            <person name="Park S.-H."/>
            <person name="Parro V."/>
            <person name="Pohl T.M."/>
            <person name="Portetelle D."/>
            <person name="Porwollik S."/>
            <person name="Prescott A.M."/>
            <person name="Presecan E."/>
            <person name="Pujic P."/>
            <person name="Purnelle B."/>
            <person name="Rapoport G."/>
            <person name="Rey M."/>
            <person name="Reynolds S."/>
            <person name="Rieger M."/>
            <person name="Rivolta C."/>
            <person name="Rocha E."/>
            <person name="Roche B."/>
            <person name="Rose M."/>
            <person name="Sadaie Y."/>
            <person name="Sato T."/>
            <person name="Scanlan E."/>
            <person name="Schleich S."/>
            <person name="Schroeter R."/>
            <person name="Scoffone F."/>
            <person name="Sekiguchi J."/>
            <person name="Sekowska A."/>
            <person name="Seror S.J."/>
            <person name="Serror P."/>
            <person name="Shin B.-S."/>
            <person name="Soldo B."/>
            <person name="Sorokin A."/>
            <person name="Tacconi E."/>
            <person name="Takagi T."/>
            <person name="Takahashi H."/>
            <person name="Takemaru K."/>
            <person name="Takeuchi M."/>
            <person name="Tamakoshi A."/>
            <person name="Tanaka T."/>
            <person name="Terpstra P."/>
            <person name="Tognoni A."/>
            <person name="Tosato V."/>
            <person name="Uchiyama S."/>
            <person name="Vandenbol M."/>
            <person name="Vannier F."/>
            <person name="Vassarotti A."/>
            <person name="Viari A."/>
            <person name="Wambutt R."/>
            <person name="Wedler E."/>
            <person name="Wedler H."/>
            <person name="Weitzenegger T."/>
            <person name="Winters P."/>
            <person name="Wipat A."/>
            <person name="Yamamoto H."/>
            <person name="Yamane K."/>
            <person name="Yasumoto K."/>
            <person name="Yata K."/>
            <person name="Yoshida K."/>
            <person name="Yoshikawa H.-F."/>
            <person name="Zumstein E."/>
            <person name="Yoshikawa H."/>
            <person name="Danchin A."/>
        </authorList>
    </citation>
    <scope>NUCLEOTIDE SEQUENCE [LARGE SCALE GENOMIC DNA]</scope>
    <source>
        <strain>168</strain>
    </source>
</reference>